<proteinExistence type="inferred from homology"/>
<feature type="chain" id="PRO_0000175835" description="Probable transcriptional regulatory protein lin1570">
    <location>
        <begin position="1"/>
        <end position="241"/>
    </location>
</feature>
<feature type="region of interest" description="Disordered" evidence="2">
    <location>
        <begin position="1"/>
        <end position="22"/>
    </location>
</feature>
<feature type="compositionally biased region" description="Polar residues" evidence="2">
    <location>
        <begin position="1"/>
        <end position="14"/>
    </location>
</feature>
<organism>
    <name type="scientific">Listeria innocua serovar 6a (strain ATCC BAA-680 / CLIP 11262)</name>
    <dbReference type="NCBI Taxonomy" id="272626"/>
    <lineage>
        <taxon>Bacteria</taxon>
        <taxon>Bacillati</taxon>
        <taxon>Bacillota</taxon>
        <taxon>Bacilli</taxon>
        <taxon>Bacillales</taxon>
        <taxon>Listeriaceae</taxon>
        <taxon>Listeria</taxon>
    </lineage>
</organism>
<keyword id="KW-0963">Cytoplasm</keyword>
<keyword id="KW-0238">DNA-binding</keyword>
<keyword id="KW-0804">Transcription</keyword>
<keyword id="KW-0805">Transcription regulation</keyword>
<comment type="subcellular location">
    <subcellularLocation>
        <location evidence="1">Cytoplasm</location>
    </subcellularLocation>
</comment>
<comment type="similarity">
    <text evidence="1">Belongs to the TACO1 family.</text>
</comment>
<protein>
    <recommendedName>
        <fullName evidence="1">Probable transcriptional regulatory protein lin1570</fullName>
    </recommendedName>
</protein>
<name>Y1570_LISIN</name>
<evidence type="ECO:0000255" key="1">
    <source>
        <dbReference type="HAMAP-Rule" id="MF_00693"/>
    </source>
</evidence>
<evidence type="ECO:0000256" key="2">
    <source>
        <dbReference type="SAM" id="MobiDB-lite"/>
    </source>
</evidence>
<reference key="1">
    <citation type="journal article" date="2001" name="Science">
        <title>Comparative genomics of Listeria species.</title>
        <authorList>
            <person name="Glaser P."/>
            <person name="Frangeul L."/>
            <person name="Buchrieser C."/>
            <person name="Rusniok C."/>
            <person name="Amend A."/>
            <person name="Baquero F."/>
            <person name="Berche P."/>
            <person name="Bloecker H."/>
            <person name="Brandt P."/>
            <person name="Chakraborty T."/>
            <person name="Charbit A."/>
            <person name="Chetouani F."/>
            <person name="Couve E."/>
            <person name="de Daruvar A."/>
            <person name="Dehoux P."/>
            <person name="Domann E."/>
            <person name="Dominguez-Bernal G."/>
            <person name="Duchaud E."/>
            <person name="Durant L."/>
            <person name="Dussurget O."/>
            <person name="Entian K.-D."/>
            <person name="Fsihi H."/>
            <person name="Garcia-del Portillo F."/>
            <person name="Garrido P."/>
            <person name="Gautier L."/>
            <person name="Goebel W."/>
            <person name="Gomez-Lopez N."/>
            <person name="Hain T."/>
            <person name="Hauf J."/>
            <person name="Jackson D."/>
            <person name="Jones L.-M."/>
            <person name="Kaerst U."/>
            <person name="Kreft J."/>
            <person name="Kuhn M."/>
            <person name="Kunst F."/>
            <person name="Kurapkat G."/>
            <person name="Madueno E."/>
            <person name="Maitournam A."/>
            <person name="Mata Vicente J."/>
            <person name="Ng E."/>
            <person name="Nedjari H."/>
            <person name="Nordsiek G."/>
            <person name="Novella S."/>
            <person name="de Pablos B."/>
            <person name="Perez-Diaz J.-C."/>
            <person name="Purcell R."/>
            <person name="Remmel B."/>
            <person name="Rose M."/>
            <person name="Schlueter T."/>
            <person name="Simoes N."/>
            <person name="Tierrez A."/>
            <person name="Vazquez-Boland J.-A."/>
            <person name="Voss H."/>
            <person name="Wehland J."/>
            <person name="Cossart P."/>
        </authorList>
    </citation>
    <scope>NUCLEOTIDE SEQUENCE [LARGE SCALE GENOMIC DNA]</scope>
    <source>
        <strain>ATCC BAA-680 / CLIP 11262</strain>
    </source>
</reference>
<sequence>MAGHSKWNNIQGRKNAQDSKRSKVFQKLAREIFVAAKKGPDPNLNPSLRLVMDKAKAVNMPNDNIKRAIDKAAGNTSGENYDEVTYEGYAPGGIAVLVHALTDNKNRTSTNVRVAFNKNGGSLGETGSVSYMFDRKGYLVILREGLTVDEEEFMLEAIEAGADDVEVSDDVFEVFTEPGAFSDVKDALQQAGYTFATAELSMFPTVYNEIAENNQTQFDKMMEALEDDDDVQEVYTNAEIN</sequence>
<accession>Q92BH9</accession>
<dbReference type="EMBL" id="AL596169">
    <property type="protein sequence ID" value="CAC96801.1"/>
    <property type="molecule type" value="Genomic_DNA"/>
</dbReference>
<dbReference type="PIR" id="AI1628">
    <property type="entry name" value="AI1628"/>
</dbReference>
<dbReference type="RefSeq" id="WP_003762405.1">
    <property type="nucleotide sequence ID" value="NC_003212.1"/>
</dbReference>
<dbReference type="SMR" id="Q92BH9"/>
<dbReference type="STRING" id="272626.gene:17565901"/>
<dbReference type="KEGG" id="lin:lin1570"/>
<dbReference type="eggNOG" id="COG0217">
    <property type="taxonomic scope" value="Bacteria"/>
</dbReference>
<dbReference type="HOGENOM" id="CLU_062974_2_2_9"/>
<dbReference type="OrthoDB" id="9781053at2"/>
<dbReference type="Proteomes" id="UP000002513">
    <property type="component" value="Chromosome"/>
</dbReference>
<dbReference type="GO" id="GO:0005829">
    <property type="term" value="C:cytosol"/>
    <property type="evidence" value="ECO:0007669"/>
    <property type="project" value="TreeGrafter"/>
</dbReference>
<dbReference type="GO" id="GO:0003677">
    <property type="term" value="F:DNA binding"/>
    <property type="evidence" value="ECO:0007669"/>
    <property type="project" value="UniProtKB-UniRule"/>
</dbReference>
<dbReference type="GO" id="GO:0006355">
    <property type="term" value="P:regulation of DNA-templated transcription"/>
    <property type="evidence" value="ECO:0007669"/>
    <property type="project" value="UniProtKB-UniRule"/>
</dbReference>
<dbReference type="FunFam" id="1.10.10.200:FF:000002">
    <property type="entry name" value="Probable transcriptional regulatory protein CLM62_37755"/>
    <property type="match status" value="1"/>
</dbReference>
<dbReference type="FunFam" id="3.30.70.980:FF:000002">
    <property type="entry name" value="Probable transcriptional regulatory protein YebC"/>
    <property type="match status" value="1"/>
</dbReference>
<dbReference type="Gene3D" id="1.10.10.200">
    <property type="match status" value="1"/>
</dbReference>
<dbReference type="Gene3D" id="3.30.70.980">
    <property type="match status" value="2"/>
</dbReference>
<dbReference type="HAMAP" id="MF_00693">
    <property type="entry name" value="Transcrip_reg_TACO1"/>
    <property type="match status" value="1"/>
</dbReference>
<dbReference type="InterPro" id="IPR017856">
    <property type="entry name" value="Integrase-like_N"/>
</dbReference>
<dbReference type="InterPro" id="IPR048300">
    <property type="entry name" value="TACO1_YebC-like_2nd/3rd_dom"/>
</dbReference>
<dbReference type="InterPro" id="IPR049083">
    <property type="entry name" value="TACO1_YebC_N"/>
</dbReference>
<dbReference type="InterPro" id="IPR002876">
    <property type="entry name" value="Transcrip_reg_TACO1-like"/>
</dbReference>
<dbReference type="InterPro" id="IPR026564">
    <property type="entry name" value="Transcrip_reg_TACO1-like_dom3"/>
</dbReference>
<dbReference type="InterPro" id="IPR029072">
    <property type="entry name" value="YebC-like"/>
</dbReference>
<dbReference type="NCBIfam" id="NF001030">
    <property type="entry name" value="PRK00110.1"/>
    <property type="match status" value="1"/>
</dbReference>
<dbReference type="NCBIfam" id="NF009044">
    <property type="entry name" value="PRK12378.1"/>
    <property type="match status" value="1"/>
</dbReference>
<dbReference type="NCBIfam" id="TIGR01033">
    <property type="entry name" value="YebC/PmpR family DNA-binding transcriptional regulator"/>
    <property type="match status" value="1"/>
</dbReference>
<dbReference type="PANTHER" id="PTHR12532:SF6">
    <property type="entry name" value="TRANSCRIPTIONAL REGULATORY PROTEIN YEBC-RELATED"/>
    <property type="match status" value="1"/>
</dbReference>
<dbReference type="PANTHER" id="PTHR12532">
    <property type="entry name" value="TRANSLATIONAL ACTIVATOR OF CYTOCHROME C OXIDASE 1"/>
    <property type="match status" value="1"/>
</dbReference>
<dbReference type="Pfam" id="PF20772">
    <property type="entry name" value="TACO1_YebC_N"/>
    <property type="match status" value="1"/>
</dbReference>
<dbReference type="Pfam" id="PF01709">
    <property type="entry name" value="Transcrip_reg"/>
    <property type="match status" value="1"/>
</dbReference>
<dbReference type="SUPFAM" id="SSF75625">
    <property type="entry name" value="YebC-like"/>
    <property type="match status" value="1"/>
</dbReference>
<gene>
    <name type="ordered locus">lin1570</name>
</gene>